<gene>
    <name evidence="1" type="primary">egsA</name>
    <name type="ordered locus">Msp_0997</name>
</gene>
<reference key="1">
    <citation type="journal article" date="2006" name="J. Bacteriol.">
        <title>The genome sequence of Methanosphaera stadtmanae reveals why this human intestinal archaeon is restricted to methanol and H2 for methane formation and ATP synthesis.</title>
        <authorList>
            <person name="Fricke W.F."/>
            <person name="Seedorf H."/>
            <person name="Henne A."/>
            <person name="Kruer M."/>
            <person name="Liesegang H."/>
            <person name="Hedderich R."/>
            <person name="Gottschalk G."/>
            <person name="Thauer R.K."/>
        </authorList>
    </citation>
    <scope>NUCLEOTIDE SEQUENCE [LARGE SCALE GENOMIC DNA]</scope>
    <source>
        <strain>ATCC 43021 / DSM 3091 / JCM 11832 / MCB-3</strain>
    </source>
</reference>
<protein>
    <recommendedName>
        <fullName evidence="1">Glycerol-1-phosphate dehydrogenase [NAD(P)+]</fullName>
        <shortName evidence="1">G1P dehydrogenase</shortName>
        <shortName evidence="1">G1PDH</shortName>
        <ecNumber evidence="1">1.1.1.261</ecNumber>
    </recommendedName>
    <alternativeName>
        <fullName evidence="1">Enantiomeric glycerophosphate synthase</fullName>
    </alternativeName>
    <alternativeName>
        <fullName evidence="1">sn-glycerol-1-phosphate dehydrogenase</fullName>
    </alternativeName>
</protein>
<evidence type="ECO:0000255" key="1">
    <source>
        <dbReference type="HAMAP-Rule" id="MF_00497"/>
    </source>
</evidence>
<name>G1PDH_METST</name>
<accession>Q2NFL8</accession>
<dbReference type="EC" id="1.1.1.261" evidence="1"/>
<dbReference type="EMBL" id="CP000102">
    <property type="protein sequence ID" value="ABC57385.1"/>
    <property type="molecule type" value="Genomic_DNA"/>
</dbReference>
<dbReference type="RefSeq" id="WP_011406584.1">
    <property type="nucleotide sequence ID" value="NC_007681.1"/>
</dbReference>
<dbReference type="SMR" id="Q2NFL8"/>
<dbReference type="STRING" id="339860.Msp_0997"/>
<dbReference type="KEGG" id="mst:Msp_0997"/>
<dbReference type="eggNOG" id="arCOG00982">
    <property type="taxonomic scope" value="Archaea"/>
</dbReference>
<dbReference type="HOGENOM" id="CLU_038362_0_0_2"/>
<dbReference type="OrthoDB" id="8656at2157"/>
<dbReference type="UniPathway" id="UPA00940"/>
<dbReference type="Proteomes" id="UP000001931">
    <property type="component" value="Chromosome"/>
</dbReference>
<dbReference type="GO" id="GO:0005737">
    <property type="term" value="C:cytoplasm"/>
    <property type="evidence" value="ECO:0007669"/>
    <property type="project" value="UniProtKB-SubCell"/>
</dbReference>
<dbReference type="GO" id="GO:0106357">
    <property type="term" value="F:glycerol-1-phosphate dehydrogenase (NAD+) activity"/>
    <property type="evidence" value="ECO:0007669"/>
    <property type="project" value="RHEA"/>
</dbReference>
<dbReference type="GO" id="GO:0106358">
    <property type="term" value="F:glycerol-1-phosphate dehydrogenase (NADP+) activity"/>
    <property type="evidence" value="ECO:0007669"/>
    <property type="project" value="RHEA"/>
</dbReference>
<dbReference type="GO" id="GO:0046872">
    <property type="term" value="F:metal ion binding"/>
    <property type="evidence" value="ECO:0007669"/>
    <property type="project" value="UniProtKB-KW"/>
</dbReference>
<dbReference type="GO" id="GO:0006650">
    <property type="term" value="P:glycerophospholipid metabolic process"/>
    <property type="evidence" value="ECO:0007669"/>
    <property type="project" value="UniProtKB-UniRule"/>
</dbReference>
<dbReference type="GO" id="GO:0008654">
    <property type="term" value="P:phospholipid biosynthetic process"/>
    <property type="evidence" value="ECO:0007669"/>
    <property type="project" value="UniProtKB-KW"/>
</dbReference>
<dbReference type="CDD" id="cd08173">
    <property type="entry name" value="Gro1PDH"/>
    <property type="match status" value="1"/>
</dbReference>
<dbReference type="Gene3D" id="3.40.50.1970">
    <property type="match status" value="1"/>
</dbReference>
<dbReference type="Gene3D" id="1.20.1090.10">
    <property type="entry name" value="Dehydroquinate synthase-like - alpha domain"/>
    <property type="match status" value="1"/>
</dbReference>
<dbReference type="HAMAP" id="MF_00497_A">
    <property type="entry name" value="G1P_dehydrogenase_A"/>
    <property type="match status" value="1"/>
</dbReference>
<dbReference type="InterPro" id="IPR023002">
    <property type="entry name" value="G1P_dehydrogenase_arc"/>
</dbReference>
<dbReference type="InterPro" id="IPR032837">
    <property type="entry name" value="G1PDH"/>
</dbReference>
<dbReference type="InterPro" id="IPR016205">
    <property type="entry name" value="Glycerol_DH"/>
</dbReference>
<dbReference type="NCBIfam" id="NF002022">
    <property type="entry name" value="PRK00843.1"/>
    <property type="match status" value="1"/>
</dbReference>
<dbReference type="PANTHER" id="PTHR43616">
    <property type="entry name" value="GLYCEROL DEHYDROGENASE"/>
    <property type="match status" value="1"/>
</dbReference>
<dbReference type="PANTHER" id="PTHR43616:SF5">
    <property type="entry name" value="GLYCEROL DEHYDROGENASE 1"/>
    <property type="match status" value="1"/>
</dbReference>
<dbReference type="Pfam" id="PF13685">
    <property type="entry name" value="Fe-ADH_2"/>
    <property type="match status" value="1"/>
</dbReference>
<dbReference type="PIRSF" id="PIRSF000112">
    <property type="entry name" value="Glycerol_dehydrogenase"/>
    <property type="match status" value="1"/>
</dbReference>
<dbReference type="SUPFAM" id="SSF56796">
    <property type="entry name" value="Dehydroquinate synthase-like"/>
    <property type="match status" value="1"/>
</dbReference>
<comment type="function">
    <text evidence="1">Catalyzes the NAD(P)H-dependent reduction of dihydroxyacetonephosphate (DHAP or glycerone phosphate) to glycerol 1-phosphate (G1P). The G1P thus generated is used as the glycerophosphate backbone of phospholipids in the cellular membranes of Archaea.</text>
</comment>
<comment type="catalytic activity">
    <reaction evidence="1">
        <text>sn-glycerol 1-phosphate + NAD(+) = dihydroxyacetone phosphate + NADH + H(+)</text>
        <dbReference type="Rhea" id="RHEA:21412"/>
        <dbReference type="ChEBI" id="CHEBI:15378"/>
        <dbReference type="ChEBI" id="CHEBI:57540"/>
        <dbReference type="ChEBI" id="CHEBI:57642"/>
        <dbReference type="ChEBI" id="CHEBI:57685"/>
        <dbReference type="ChEBI" id="CHEBI:57945"/>
        <dbReference type="EC" id="1.1.1.261"/>
    </reaction>
</comment>
<comment type="catalytic activity">
    <reaction evidence="1">
        <text>sn-glycerol 1-phosphate + NADP(+) = dihydroxyacetone phosphate + NADPH + H(+)</text>
        <dbReference type="Rhea" id="RHEA:21416"/>
        <dbReference type="ChEBI" id="CHEBI:15378"/>
        <dbReference type="ChEBI" id="CHEBI:57642"/>
        <dbReference type="ChEBI" id="CHEBI:57685"/>
        <dbReference type="ChEBI" id="CHEBI:57783"/>
        <dbReference type="ChEBI" id="CHEBI:58349"/>
        <dbReference type="EC" id="1.1.1.261"/>
    </reaction>
</comment>
<comment type="cofactor">
    <cofactor evidence="1">
        <name>Zn(2+)</name>
        <dbReference type="ChEBI" id="CHEBI:29105"/>
    </cofactor>
    <text evidence="1">Binds 1 zinc ion per subunit.</text>
</comment>
<comment type="pathway">
    <text evidence="1">Membrane lipid metabolism; glycerophospholipid metabolism.</text>
</comment>
<comment type="subunit">
    <text evidence="1">Homooctamer.</text>
</comment>
<comment type="subcellular location">
    <subcellularLocation>
        <location evidence="1">Cytoplasm</location>
    </subcellularLocation>
</comment>
<comment type="similarity">
    <text evidence="1">Belongs to the glycerol-1-phosphate dehydrogenase family.</text>
</comment>
<sequence>MDFRNVQLPREIHSGSGIIEEIGDVCDNLLPKKDVTILTGPTTKKIAGNHVIEILKESNYEISEITVNLATEESVEEVVKDSKDSSAILGVGGGKVIDVAKMASTINHIPLISVPTTAAHDGMASPRASIKNDKGTVSLKANAPFALIADTTIISQAPYRFTAAGFSDIISNLTAVEDWKLAYKLINEPFSDSAAALSVMTAKLLIDEADNIHPNNENSASVVVKGLISSGMAISIAGNSRPASGSEHKFSHALDMIAPKPALHGEQCGVGTIMMMYLQGGDWQNIKSVLEKVNAPTTAKELGIDEEYIIEALIQAHNIRKERYTILGDRGLTREAAENIALKTHVIE</sequence>
<proteinExistence type="inferred from homology"/>
<feature type="chain" id="PRO_1000050604" description="Glycerol-1-phosphate dehydrogenase [NAD(P)+]">
    <location>
        <begin position="1"/>
        <end position="348"/>
    </location>
</feature>
<feature type="binding site" evidence="1">
    <location>
        <begin position="94"/>
        <end position="98"/>
    </location>
    <ligand>
        <name>NAD(+)</name>
        <dbReference type="ChEBI" id="CHEBI:57540"/>
    </ligand>
</feature>
<feature type="binding site" evidence="1">
    <location>
        <position position="116"/>
    </location>
    <ligand>
        <name>NAD(+)</name>
        <dbReference type="ChEBI" id="CHEBI:57540"/>
    </ligand>
</feature>
<feature type="binding site" evidence="1">
    <location>
        <position position="121"/>
    </location>
    <ligand>
        <name>substrate</name>
    </ligand>
</feature>
<feature type="binding site" evidence="1">
    <location>
        <position position="125"/>
    </location>
    <ligand>
        <name>NAD(+)</name>
        <dbReference type="ChEBI" id="CHEBI:57540"/>
    </ligand>
</feature>
<feature type="binding site" evidence="1">
    <location>
        <position position="168"/>
    </location>
    <ligand>
        <name>substrate</name>
    </ligand>
</feature>
<feature type="binding site" evidence="1">
    <location>
        <position position="168"/>
    </location>
    <ligand>
        <name>Zn(2+)</name>
        <dbReference type="ChEBI" id="CHEBI:29105"/>
        <note>catalytic</note>
    </ligand>
</feature>
<feature type="binding site" evidence="1">
    <location>
        <position position="248"/>
    </location>
    <ligand>
        <name>Zn(2+)</name>
        <dbReference type="ChEBI" id="CHEBI:29105"/>
        <note>catalytic</note>
    </ligand>
</feature>
<feature type="binding site" evidence="1">
    <location>
        <position position="252"/>
    </location>
    <ligand>
        <name>substrate</name>
    </ligand>
</feature>
<feature type="binding site" evidence="1">
    <location>
        <position position="264"/>
    </location>
    <ligand>
        <name>Zn(2+)</name>
        <dbReference type="ChEBI" id="CHEBI:29105"/>
        <note>catalytic</note>
    </ligand>
</feature>
<organism>
    <name type="scientific">Methanosphaera stadtmanae (strain ATCC 43021 / DSM 3091 / JCM 11832 / MCB-3)</name>
    <dbReference type="NCBI Taxonomy" id="339860"/>
    <lineage>
        <taxon>Archaea</taxon>
        <taxon>Methanobacteriati</taxon>
        <taxon>Methanobacteriota</taxon>
        <taxon>Methanomada group</taxon>
        <taxon>Methanobacteria</taxon>
        <taxon>Methanobacteriales</taxon>
        <taxon>Methanobacteriaceae</taxon>
        <taxon>Methanosphaera</taxon>
    </lineage>
</organism>
<keyword id="KW-0963">Cytoplasm</keyword>
<keyword id="KW-0444">Lipid biosynthesis</keyword>
<keyword id="KW-0443">Lipid metabolism</keyword>
<keyword id="KW-0479">Metal-binding</keyword>
<keyword id="KW-0520">NAD</keyword>
<keyword id="KW-0521">NADP</keyword>
<keyword id="KW-0560">Oxidoreductase</keyword>
<keyword id="KW-0594">Phospholipid biosynthesis</keyword>
<keyword id="KW-1208">Phospholipid metabolism</keyword>
<keyword id="KW-1185">Reference proteome</keyword>
<keyword id="KW-0862">Zinc</keyword>